<reference key="1">
    <citation type="submission" date="2007-04" db="EMBL/GenBank/DDBJ databases">
        <title>Complete sequence of Shewanella putrefaciens CN-32.</title>
        <authorList>
            <consortium name="US DOE Joint Genome Institute"/>
            <person name="Copeland A."/>
            <person name="Lucas S."/>
            <person name="Lapidus A."/>
            <person name="Barry K."/>
            <person name="Detter J.C."/>
            <person name="Glavina del Rio T."/>
            <person name="Hammon N."/>
            <person name="Israni S."/>
            <person name="Dalin E."/>
            <person name="Tice H."/>
            <person name="Pitluck S."/>
            <person name="Chain P."/>
            <person name="Malfatti S."/>
            <person name="Shin M."/>
            <person name="Vergez L."/>
            <person name="Schmutz J."/>
            <person name="Larimer F."/>
            <person name="Land M."/>
            <person name="Hauser L."/>
            <person name="Kyrpides N."/>
            <person name="Mikhailova N."/>
            <person name="Romine M.F."/>
            <person name="Fredrickson J."/>
            <person name="Tiedje J."/>
            <person name="Richardson P."/>
        </authorList>
    </citation>
    <scope>NUCLEOTIDE SEQUENCE [LARGE SCALE GENOMIC DNA]</scope>
    <source>
        <strain>CN-32 / ATCC BAA-453</strain>
    </source>
</reference>
<organism>
    <name type="scientific">Shewanella putrefaciens (strain CN-32 / ATCC BAA-453)</name>
    <dbReference type="NCBI Taxonomy" id="319224"/>
    <lineage>
        <taxon>Bacteria</taxon>
        <taxon>Pseudomonadati</taxon>
        <taxon>Pseudomonadota</taxon>
        <taxon>Gammaproteobacteria</taxon>
        <taxon>Alteromonadales</taxon>
        <taxon>Shewanellaceae</taxon>
        <taxon>Shewanella</taxon>
    </lineage>
</organism>
<proteinExistence type="inferred from homology"/>
<sequence length="474" mass="53675">MSKKLHIKTWGCQMNEYDSSKMADLLGEYQGYTLTEDASEADILLLNTCSIREKAQEKVFHQLGRWKTLKDKNPNLIIGVGGCVASQEGKAIKDRAQCVDIIFGPQTLHRLPDMIEQVRRGDKAVIDISFPEIEKFDRLPEPRAEGPTAFVSIMEGCSKYCSFCVVPYTRGEEVSRPLDDIILEIAQLAEQGVREVNLLGQNVNAYRGATHDGSICSFAELLRFVAAIDGIDRIRFTTSHPIEFTQDIIDVYEDTPELVSFLHLPVQSGSDRILTAMKRGHMAIEYKSIIRRLRKAREGIQISSDFIIGFPGETKEDFADTMKLIEEIGFDHSFSFIYSARPGTPAADLPDNVDMEEKKQRLAILQDRITQQAMRYSRHMMGTVQRILVEGPSVKNPMELRGRTENNRVVNFEGLPKHIGTFVDVEIVDVYTNSLRGKFIRGEDEMDLRRSLRPSDILAKHKQDDDLGVTQFKP</sequence>
<dbReference type="EC" id="2.8.4.3" evidence="1"/>
<dbReference type="EMBL" id="CP000681">
    <property type="protein sequence ID" value="ABP76574.1"/>
    <property type="molecule type" value="Genomic_DNA"/>
</dbReference>
<dbReference type="SMR" id="A4Y9E1"/>
<dbReference type="STRING" id="319224.Sputcn32_2855"/>
<dbReference type="KEGG" id="spc:Sputcn32_2855"/>
<dbReference type="eggNOG" id="COG0621">
    <property type="taxonomic scope" value="Bacteria"/>
</dbReference>
<dbReference type="HOGENOM" id="CLU_018697_2_0_6"/>
<dbReference type="GO" id="GO:0005829">
    <property type="term" value="C:cytosol"/>
    <property type="evidence" value="ECO:0007669"/>
    <property type="project" value="TreeGrafter"/>
</dbReference>
<dbReference type="GO" id="GO:0051539">
    <property type="term" value="F:4 iron, 4 sulfur cluster binding"/>
    <property type="evidence" value="ECO:0007669"/>
    <property type="project" value="UniProtKB-UniRule"/>
</dbReference>
<dbReference type="GO" id="GO:0046872">
    <property type="term" value="F:metal ion binding"/>
    <property type="evidence" value="ECO:0007669"/>
    <property type="project" value="UniProtKB-KW"/>
</dbReference>
<dbReference type="GO" id="GO:0035597">
    <property type="term" value="F:N6-isopentenyladenosine methylthiotransferase activity"/>
    <property type="evidence" value="ECO:0007669"/>
    <property type="project" value="TreeGrafter"/>
</dbReference>
<dbReference type="CDD" id="cd01335">
    <property type="entry name" value="Radical_SAM"/>
    <property type="match status" value="1"/>
</dbReference>
<dbReference type="FunFam" id="3.40.50.12160:FF:000001">
    <property type="entry name" value="tRNA-2-methylthio-N(6)-dimethylallyladenosine synthase"/>
    <property type="match status" value="1"/>
</dbReference>
<dbReference type="FunFam" id="3.80.30.20:FF:000001">
    <property type="entry name" value="tRNA-2-methylthio-N(6)-dimethylallyladenosine synthase 2"/>
    <property type="match status" value="1"/>
</dbReference>
<dbReference type="Gene3D" id="3.40.50.12160">
    <property type="entry name" value="Methylthiotransferase, N-terminal domain"/>
    <property type="match status" value="1"/>
</dbReference>
<dbReference type="Gene3D" id="3.80.30.20">
    <property type="entry name" value="tm_1862 like domain"/>
    <property type="match status" value="1"/>
</dbReference>
<dbReference type="HAMAP" id="MF_01864">
    <property type="entry name" value="tRNA_metthiotr_MiaB"/>
    <property type="match status" value="1"/>
</dbReference>
<dbReference type="InterPro" id="IPR006638">
    <property type="entry name" value="Elp3/MiaA/NifB-like_rSAM"/>
</dbReference>
<dbReference type="InterPro" id="IPR005839">
    <property type="entry name" value="Methylthiotransferase"/>
</dbReference>
<dbReference type="InterPro" id="IPR020612">
    <property type="entry name" value="Methylthiotransferase_CS"/>
</dbReference>
<dbReference type="InterPro" id="IPR013848">
    <property type="entry name" value="Methylthiotransferase_N"/>
</dbReference>
<dbReference type="InterPro" id="IPR038135">
    <property type="entry name" value="Methylthiotransferase_N_sf"/>
</dbReference>
<dbReference type="InterPro" id="IPR006463">
    <property type="entry name" value="MiaB_methiolase"/>
</dbReference>
<dbReference type="InterPro" id="IPR007197">
    <property type="entry name" value="rSAM"/>
</dbReference>
<dbReference type="InterPro" id="IPR023404">
    <property type="entry name" value="rSAM_horseshoe"/>
</dbReference>
<dbReference type="InterPro" id="IPR002792">
    <property type="entry name" value="TRAM_dom"/>
</dbReference>
<dbReference type="NCBIfam" id="TIGR01574">
    <property type="entry name" value="miaB-methiolase"/>
    <property type="match status" value="1"/>
</dbReference>
<dbReference type="NCBIfam" id="TIGR00089">
    <property type="entry name" value="MiaB/RimO family radical SAM methylthiotransferase"/>
    <property type="match status" value="1"/>
</dbReference>
<dbReference type="PANTHER" id="PTHR43020">
    <property type="entry name" value="CDK5 REGULATORY SUBUNIT-ASSOCIATED PROTEIN 1"/>
    <property type="match status" value="1"/>
</dbReference>
<dbReference type="PANTHER" id="PTHR43020:SF2">
    <property type="entry name" value="MITOCHONDRIAL TRNA METHYLTHIOTRANSFERASE CDK5RAP1"/>
    <property type="match status" value="1"/>
</dbReference>
<dbReference type="Pfam" id="PF04055">
    <property type="entry name" value="Radical_SAM"/>
    <property type="match status" value="1"/>
</dbReference>
<dbReference type="Pfam" id="PF01938">
    <property type="entry name" value="TRAM"/>
    <property type="match status" value="1"/>
</dbReference>
<dbReference type="Pfam" id="PF00919">
    <property type="entry name" value="UPF0004"/>
    <property type="match status" value="1"/>
</dbReference>
<dbReference type="SFLD" id="SFLDF00273">
    <property type="entry name" value="(dimethylallyl)adenosine_tRNA"/>
    <property type="match status" value="1"/>
</dbReference>
<dbReference type="SFLD" id="SFLDG01082">
    <property type="entry name" value="B12-binding_domain_containing"/>
    <property type="match status" value="1"/>
</dbReference>
<dbReference type="SFLD" id="SFLDS00029">
    <property type="entry name" value="Radical_SAM"/>
    <property type="match status" value="1"/>
</dbReference>
<dbReference type="SMART" id="SM00729">
    <property type="entry name" value="Elp3"/>
    <property type="match status" value="1"/>
</dbReference>
<dbReference type="SUPFAM" id="SSF102114">
    <property type="entry name" value="Radical SAM enzymes"/>
    <property type="match status" value="1"/>
</dbReference>
<dbReference type="PROSITE" id="PS51449">
    <property type="entry name" value="MTTASE_N"/>
    <property type="match status" value="1"/>
</dbReference>
<dbReference type="PROSITE" id="PS01278">
    <property type="entry name" value="MTTASE_RADICAL"/>
    <property type="match status" value="1"/>
</dbReference>
<dbReference type="PROSITE" id="PS51918">
    <property type="entry name" value="RADICAL_SAM"/>
    <property type="match status" value="1"/>
</dbReference>
<dbReference type="PROSITE" id="PS50926">
    <property type="entry name" value="TRAM"/>
    <property type="match status" value="1"/>
</dbReference>
<accession>A4Y9E1</accession>
<name>MIAB_SHEPC</name>
<feature type="chain" id="PRO_0000374543" description="tRNA-2-methylthio-N(6)-dimethylallyladenosine synthase">
    <location>
        <begin position="1"/>
        <end position="474"/>
    </location>
</feature>
<feature type="domain" description="MTTase N-terminal" evidence="1">
    <location>
        <begin position="3"/>
        <end position="120"/>
    </location>
</feature>
<feature type="domain" description="Radical SAM core" evidence="2">
    <location>
        <begin position="143"/>
        <end position="375"/>
    </location>
</feature>
<feature type="domain" description="TRAM" evidence="1">
    <location>
        <begin position="378"/>
        <end position="441"/>
    </location>
</feature>
<feature type="binding site" evidence="1">
    <location>
        <position position="12"/>
    </location>
    <ligand>
        <name>[4Fe-4S] cluster</name>
        <dbReference type="ChEBI" id="CHEBI:49883"/>
        <label>1</label>
    </ligand>
</feature>
<feature type="binding site" evidence="1">
    <location>
        <position position="49"/>
    </location>
    <ligand>
        <name>[4Fe-4S] cluster</name>
        <dbReference type="ChEBI" id="CHEBI:49883"/>
        <label>1</label>
    </ligand>
</feature>
<feature type="binding site" evidence="1">
    <location>
        <position position="83"/>
    </location>
    <ligand>
        <name>[4Fe-4S] cluster</name>
        <dbReference type="ChEBI" id="CHEBI:49883"/>
        <label>1</label>
    </ligand>
</feature>
<feature type="binding site" evidence="1">
    <location>
        <position position="157"/>
    </location>
    <ligand>
        <name>[4Fe-4S] cluster</name>
        <dbReference type="ChEBI" id="CHEBI:49883"/>
        <label>2</label>
        <note>4Fe-4S-S-AdoMet</note>
    </ligand>
</feature>
<feature type="binding site" evidence="1">
    <location>
        <position position="161"/>
    </location>
    <ligand>
        <name>[4Fe-4S] cluster</name>
        <dbReference type="ChEBI" id="CHEBI:49883"/>
        <label>2</label>
        <note>4Fe-4S-S-AdoMet</note>
    </ligand>
</feature>
<feature type="binding site" evidence="1">
    <location>
        <position position="164"/>
    </location>
    <ligand>
        <name>[4Fe-4S] cluster</name>
        <dbReference type="ChEBI" id="CHEBI:49883"/>
        <label>2</label>
        <note>4Fe-4S-S-AdoMet</note>
    </ligand>
</feature>
<keyword id="KW-0004">4Fe-4S</keyword>
<keyword id="KW-0963">Cytoplasm</keyword>
<keyword id="KW-0408">Iron</keyword>
<keyword id="KW-0411">Iron-sulfur</keyword>
<keyword id="KW-0479">Metal-binding</keyword>
<keyword id="KW-0949">S-adenosyl-L-methionine</keyword>
<keyword id="KW-0808">Transferase</keyword>
<keyword id="KW-0819">tRNA processing</keyword>
<comment type="function">
    <text evidence="1">Catalyzes the methylthiolation of N6-(dimethylallyl)adenosine (i(6)A), leading to the formation of 2-methylthio-N6-(dimethylallyl)adenosine (ms(2)i(6)A) at position 37 in tRNAs that read codons beginning with uridine.</text>
</comment>
<comment type="catalytic activity">
    <reaction evidence="1">
        <text>N(6)-dimethylallyladenosine(37) in tRNA + (sulfur carrier)-SH + AH2 + 2 S-adenosyl-L-methionine = 2-methylsulfanyl-N(6)-dimethylallyladenosine(37) in tRNA + (sulfur carrier)-H + 5'-deoxyadenosine + L-methionine + A + S-adenosyl-L-homocysteine + 2 H(+)</text>
        <dbReference type="Rhea" id="RHEA:37067"/>
        <dbReference type="Rhea" id="RHEA-COMP:10375"/>
        <dbReference type="Rhea" id="RHEA-COMP:10376"/>
        <dbReference type="Rhea" id="RHEA-COMP:14737"/>
        <dbReference type="Rhea" id="RHEA-COMP:14739"/>
        <dbReference type="ChEBI" id="CHEBI:13193"/>
        <dbReference type="ChEBI" id="CHEBI:15378"/>
        <dbReference type="ChEBI" id="CHEBI:17319"/>
        <dbReference type="ChEBI" id="CHEBI:17499"/>
        <dbReference type="ChEBI" id="CHEBI:29917"/>
        <dbReference type="ChEBI" id="CHEBI:57844"/>
        <dbReference type="ChEBI" id="CHEBI:57856"/>
        <dbReference type="ChEBI" id="CHEBI:59789"/>
        <dbReference type="ChEBI" id="CHEBI:64428"/>
        <dbReference type="ChEBI" id="CHEBI:74415"/>
        <dbReference type="ChEBI" id="CHEBI:74417"/>
        <dbReference type="EC" id="2.8.4.3"/>
    </reaction>
</comment>
<comment type="cofactor">
    <cofactor evidence="1">
        <name>[4Fe-4S] cluster</name>
        <dbReference type="ChEBI" id="CHEBI:49883"/>
    </cofactor>
    <text evidence="1">Binds 2 [4Fe-4S] clusters. One cluster is coordinated with 3 cysteines and an exchangeable S-adenosyl-L-methionine.</text>
</comment>
<comment type="subunit">
    <text evidence="1">Monomer.</text>
</comment>
<comment type="subcellular location">
    <subcellularLocation>
        <location evidence="1">Cytoplasm</location>
    </subcellularLocation>
</comment>
<comment type="similarity">
    <text evidence="1">Belongs to the methylthiotransferase family. MiaB subfamily.</text>
</comment>
<gene>
    <name evidence="1" type="primary">miaB</name>
    <name type="ordered locus">Sputcn32_2855</name>
</gene>
<protein>
    <recommendedName>
        <fullName evidence="1">tRNA-2-methylthio-N(6)-dimethylallyladenosine synthase</fullName>
        <ecNumber evidence="1">2.8.4.3</ecNumber>
    </recommendedName>
    <alternativeName>
        <fullName evidence="1">(Dimethylallyl)adenosine tRNA methylthiotransferase MiaB</fullName>
    </alternativeName>
    <alternativeName>
        <fullName evidence="1">tRNA-i(6)A37 methylthiotransferase</fullName>
    </alternativeName>
</protein>
<evidence type="ECO:0000255" key="1">
    <source>
        <dbReference type="HAMAP-Rule" id="MF_01864"/>
    </source>
</evidence>
<evidence type="ECO:0000255" key="2">
    <source>
        <dbReference type="PROSITE-ProRule" id="PRU01266"/>
    </source>
</evidence>